<geneLocation type="chloroplast"/>
<dbReference type="EC" id="4.1.1.39" evidence="1"/>
<dbReference type="EMBL" id="U21008">
    <property type="protein sequence ID" value="AAA91981.1"/>
    <property type="molecule type" value="mRNA"/>
</dbReference>
<dbReference type="PIR" id="S66170">
    <property type="entry name" value="S66170"/>
</dbReference>
<dbReference type="GO" id="GO:0009507">
    <property type="term" value="C:chloroplast"/>
    <property type="evidence" value="ECO:0007669"/>
    <property type="project" value="UniProtKB-SubCell"/>
</dbReference>
<dbReference type="GO" id="GO:0000287">
    <property type="term" value="F:magnesium ion binding"/>
    <property type="evidence" value="ECO:0007669"/>
    <property type="project" value="InterPro"/>
</dbReference>
<dbReference type="GO" id="GO:0004497">
    <property type="term" value="F:monooxygenase activity"/>
    <property type="evidence" value="ECO:0007669"/>
    <property type="project" value="UniProtKB-KW"/>
</dbReference>
<dbReference type="GO" id="GO:0016984">
    <property type="term" value="F:ribulose-bisphosphate carboxylase activity"/>
    <property type="evidence" value="ECO:0007669"/>
    <property type="project" value="UniProtKB-EC"/>
</dbReference>
<dbReference type="GO" id="GO:0009853">
    <property type="term" value="P:photorespiration"/>
    <property type="evidence" value="ECO:0007669"/>
    <property type="project" value="UniProtKB-KW"/>
</dbReference>
<dbReference type="GO" id="GO:0019253">
    <property type="term" value="P:reductive pentose-phosphate cycle"/>
    <property type="evidence" value="ECO:0007669"/>
    <property type="project" value="UniProtKB-KW"/>
</dbReference>
<dbReference type="CDD" id="cd08212">
    <property type="entry name" value="RuBisCO_large_I"/>
    <property type="match status" value="1"/>
</dbReference>
<dbReference type="Gene3D" id="3.20.20.110">
    <property type="entry name" value="Ribulose bisphosphate carboxylase, large subunit, C-terminal domain"/>
    <property type="match status" value="1"/>
</dbReference>
<dbReference type="Gene3D" id="3.30.70.150">
    <property type="entry name" value="RuBisCO large subunit, N-terminal domain"/>
    <property type="match status" value="1"/>
</dbReference>
<dbReference type="HAMAP" id="MF_01338">
    <property type="entry name" value="RuBisCO_L_type1"/>
    <property type="match status" value="1"/>
</dbReference>
<dbReference type="InterPro" id="IPR033966">
    <property type="entry name" value="RuBisCO"/>
</dbReference>
<dbReference type="InterPro" id="IPR020878">
    <property type="entry name" value="RuBisCo_large_chain_AS"/>
</dbReference>
<dbReference type="InterPro" id="IPR000685">
    <property type="entry name" value="RuBisCO_lsu_C"/>
</dbReference>
<dbReference type="InterPro" id="IPR036376">
    <property type="entry name" value="RuBisCO_lsu_C_sf"/>
</dbReference>
<dbReference type="InterPro" id="IPR017443">
    <property type="entry name" value="RuBisCO_lsu_fd_N"/>
</dbReference>
<dbReference type="InterPro" id="IPR036422">
    <property type="entry name" value="RuBisCO_lsu_N_sf"/>
</dbReference>
<dbReference type="InterPro" id="IPR020888">
    <property type="entry name" value="RuBisCO_lsuI"/>
</dbReference>
<dbReference type="NCBIfam" id="NF003252">
    <property type="entry name" value="PRK04208.1"/>
    <property type="match status" value="1"/>
</dbReference>
<dbReference type="PANTHER" id="PTHR42704">
    <property type="entry name" value="RIBULOSE BISPHOSPHATE CARBOXYLASE"/>
    <property type="match status" value="1"/>
</dbReference>
<dbReference type="PANTHER" id="PTHR42704:SF17">
    <property type="entry name" value="RIBULOSE BISPHOSPHATE CARBOXYLASE LARGE CHAIN"/>
    <property type="match status" value="1"/>
</dbReference>
<dbReference type="Pfam" id="PF00016">
    <property type="entry name" value="RuBisCO_large"/>
    <property type="match status" value="1"/>
</dbReference>
<dbReference type="Pfam" id="PF02788">
    <property type="entry name" value="RuBisCO_large_N"/>
    <property type="match status" value="1"/>
</dbReference>
<dbReference type="SFLD" id="SFLDG01052">
    <property type="entry name" value="RuBisCO"/>
    <property type="match status" value="1"/>
</dbReference>
<dbReference type="SFLD" id="SFLDS00014">
    <property type="entry name" value="RuBisCO"/>
    <property type="match status" value="1"/>
</dbReference>
<dbReference type="SFLD" id="SFLDG00301">
    <property type="entry name" value="RuBisCO-like_proteins"/>
    <property type="match status" value="1"/>
</dbReference>
<dbReference type="SUPFAM" id="SSF51649">
    <property type="entry name" value="RuBisCo, C-terminal domain"/>
    <property type="match status" value="1"/>
</dbReference>
<dbReference type="SUPFAM" id="SSF54966">
    <property type="entry name" value="RuBisCO, large subunit, small (N-terminal) domain"/>
    <property type="match status" value="1"/>
</dbReference>
<dbReference type="PROSITE" id="PS00157">
    <property type="entry name" value="RUBISCO_LARGE"/>
    <property type="match status" value="1"/>
</dbReference>
<feature type="chain" id="PRO_0000062469" description="Ribulose bisphosphate carboxylase large chain">
    <location>
        <begin position="1" status="less than"/>
        <end position="435" status="greater than"/>
    </location>
</feature>
<feature type="active site" description="Proton acceptor" evidence="1">
    <location>
        <position position="156"/>
    </location>
</feature>
<feature type="active site" description="Proton acceptor" evidence="1">
    <location>
        <position position="275"/>
    </location>
</feature>
<feature type="binding site" description="in homodimeric partner" evidence="1">
    <location>
        <position position="104"/>
    </location>
    <ligand>
        <name>substrate</name>
    </ligand>
</feature>
<feature type="binding site" evidence="1">
    <location>
        <position position="154"/>
    </location>
    <ligand>
        <name>substrate</name>
    </ligand>
</feature>
<feature type="binding site" evidence="1">
    <location>
        <position position="158"/>
    </location>
    <ligand>
        <name>substrate</name>
    </ligand>
</feature>
<feature type="binding site" description="via carbamate group" evidence="1">
    <location>
        <position position="182"/>
    </location>
    <ligand>
        <name>Mg(2+)</name>
        <dbReference type="ChEBI" id="CHEBI:18420"/>
    </ligand>
</feature>
<feature type="binding site" evidence="1">
    <location>
        <position position="184"/>
    </location>
    <ligand>
        <name>Mg(2+)</name>
        <dbReference type="ChEBI" id="CHEBI:18420"/>
    </ligand>
</feature>
<feature type="binding site" evidence="1">
    <location>
        <position position="185"/>
    </location>
    <ligand>
        <name>Mg(2+)</name>
        <dbReference type="ChEBI" id="CHEBI:18420"/>
    </ligand>
</feature>
<feature type="binding site" evidence="1">
    <location>
        <position position="276"/>
    </location>
    <ligand>
        <name>substrate</name>
    </ligand>
</feature>
<feature type="binding site" evidence="1">
    <location>
        <position position="308"/>
    </location>
    <ligand>
        <name>substrate</name>
    </ligand>
</feature>
<feature type="binding site" evidence="1">
    <location>
        <position position="360"/>
    </location>
    <ligand>
        <name>substrate</name>
    </ligand>
</feature>
<feature type="site" description="Transition state stabilizer" evidence="1">
    <location>
        <position position="315"/>
    </location>
</feature>
<feature type="modified residue" description="N6-carboxylysine" evidence="1">
    <location>
        <position position="182"/>
    </location>
</feature>
<feature type="non-terminal residue">
    <location>
        <position position="1"/>
    </location>
</feature>
<feature type="non-terminal residue">
    <location>
        <position position="435"/>
    </location>
</feature>
<sequence>YRLTYYTPDYQVSDTDILAAFRMTPQPGVPAEECGAAVAAESSTGTWTTVWTDGLTQLDRYKGRCYDLEPVPGESNQYIAYVAYPIDLFEEGSVTNLLTSIVGNVFGFKALRALRLEDLRIPPAYIKTFWGPPHGIQVERDRLNKYGRPLLGCTIKPKLGLSAKNYGRAVYECLRGGLDFTKDDENVNSQSFMRWRDRFXXXSEAIYKAQSETGEVKGHYLNATAGNVEEMYKRAAFAAQLGVPIVMHDYLTGGFTANTSLSMYCRDNGLLLHIHRAMHAVIDRQRNHGIHFRVLAKTLRMSGGDHLHSGTVVGKLEGEREVTLGFVDLMRDPYVEKDRSRGIYFTQDWCGMGGTMPVASGGIHVWHMPALTEIFGDDACLQFGGGTLGHPWGNAPGAAANRVASEACVQARNEGRDLSREGGDVIREACKWSPE</sequence>
<organism>
    <name type="scientific">Euglena pisciformis</name>
    <dbReference type="NCBI Taxonomy" id="38277"/>
    <lineage>
        <taxon>Eukaryota</taxon>
        <taxon>Discoba</taxon>
        <taxon>Euglenozoa</taxon>
        <taxon>Euglenida</taxon>
        <taxon>Spirocuta</taxon>
        <taxon>Euglenophyceae</taxon>
        <taxon>Euglenales</taxon>
        <taxon>Euglenaceae</taxon>
        <taxon>Euglena</taxon>
    </lineage>
</organism>
<proteinExistence type="evidence at transcript level"/>
<gene>
    <name evidence="1" type="primary">rbcL</name>
</gene>
<protein>
    <recommendedName>
        <fullName evidence="1">Ribulose bisphosphate carboxylase large chain</fullName>
        <shortName evidence="1">RuBisCO large subunit</shortName>
        <ecNumber evidence="1">4.1.1.39</ecNumber>
    </recommendedName>
</protein>
<name>RBL_EUGPI</name>
<accession>P48073</accession>
<comment type="function">
    <text evidence="1">RuBisCO catalyzes two reactions: the carboxylation of D-ribulose 1,5-bisphosphate, the primary event in carbon dioxide fixation, as well as the oxidative fragmentation of the pentose substrate in the photorespiration process. Both reactions occur simultaneously and in competition at the same active site.</text>
</comment>
<comment type="catalytic activity">
    <reaction evidence="1">
        <text>2 (2R)-3-phosphoglycerate + 2 H(+) = D-ribulose 1,5-bisphosphate + CO2 + H2O</text>
        <dbReference type="Rhea" id="RHEA:23124"/>
        <dbReference type="ChEBI" id="CHEBI:15377"/>
        <dbReference type="ChEBI" id="CHEBI:15378"/>
        <dbReference type="ChEBI" id="CHEBI:16526"/>
        <dbReference type="ChEBI" id="CHEBI:57870"/>
        <dbReference type="ChEBI" id="CHEBI:58272"/>
        <dbReference type="EC" id="4.1.1.39"/>
    </reaction>
</comment>
<comment type="catalytic activity">
    <reaction evidence="1">
        <text>D-ribulose 1,5-bisphosphate + O2 = 2-phosphoglycolate + (2R)-3-phosphoglycerate + 2 H(+)</text>
        <dbReference type="Rhea" id="RHEA:36631"/>
        <dbReference type="ChEBI" id="CHEBI:15378"/>
        <dbReference type="ChEBI" id="CHEBI:15379"/>
        <dbReference type="ChEBI" id="CHEBI:57870"/>
        <dbReference type="ChEBI" id="CHEBI:58033"/>
        <dbReference type="ChEBI" id="CHEBI:58272"/>
    </reaction>
</comment>
<comment type="cofactor">
    <cofactor evidence="1">
        <name>Mg(2+)</name>
        <dbReference type="ChEBI" id="CHEBI:18420"/>
    </cofactor>
    <text evidence="1">Binds 1 Mg(2+) ion per subunit.</text>
</comment>
<comment type="subunit">
    <text evidence="1">Heterohexadecamer of 8 large chains and 8 small chains.</text>
</comment>
<comment type="subcellular location">
    <subcellularLocation>
        <location>Plastid</location>
        <location>Chloroplast</location>
    </subcellularLocation>
</comment>
<comment type="miscellaneous">
    <text evidence="1">The basic functional RuBisCO is composed of a large chain homodimer in a 'head-to-tail' conformation. In form I RuBisCO this homodimer is arranged in a barrel-like tetramer with the small subunits forming a tetrameric 'cap' on each end of the 'barrel'.</text>
</comment>
<comment type="similarity">
    <text evidence="1">Belongs to the RuBisCO large chain family. Type I subfamily.</text>
</comment>
<evidence type="ECO:0000255" key="1">
    <source>
        <dbReference type="HAMAP-Rule" id="MF_01338"/>
    </source>
</evidence>
<keyword id="KW-0113">Calvin cycle</keyword>
<keyword id="KW-0120">Carbon dioxide fixation</keyword>
<keyword id="KW-0150">Chloroplast</keyword>
<keyword id="KW-0456">Lyase</keyword>
<keyword id="KW-0460">Magnesium</keyword>
<keyword id="KW-0479">Metal-binding</keyword>
<keyword id="KW-0503">Monooxygenase</keyword>
<keyword id="KW-0560">Oxidoreductase</keyword>
<keyword id="KW-0601">Photorespiration</keyword>
<keyword id="KW-0602">Photosynthesis</keyword>
<keyword id="KW-0934">Plastid</keyword>
<reference key="1">
    <citation type="journal article" date="1995" name="Nucleic Acids Res.">
        <title>Evidence for the late origin of introns in chloroplast genes from an evolutionary analysis of the genus Euglena.</title>
        <authorList>
            <person name="Thompson M.D."/>
            <person name="Copertino D.W."/>
            <person name="Thompson E."/>
            <person name="Favreau M.R."/>
            <person name="Hallick R.B."/>
        </authorList>
    </citation>
    <scope>NUCLEOTIDE SEQUENCE [MRNA]</scope>
    <source>
        <strain>UTEX 1604 / Var. typica</strain>
    </source>
</reference>